<dbReference type="EC" id="5.6.1.7" evidence="1"/>
<dbReference type="EMBL" id="Y13334">
    <property type="protein sequence ID" value="CAA73778.1"/>
    <property type="molecule type" value="Genomic_DNA"/>
</dbReference>
<dbReference type="EMBL" id="AF461064">
    <property type="protein sequence ID" value="AAL76936.1"/>
    <property type="molecule type" value="Genomic_DNA"/>
</dbReference>
<dbReference type="EMBL" id="AF461534">
    <property type="protein sequence ID" value="AAL67841.1"/>
    <property type="molecule type" value="Genomic_DNA"/>
</dbReference>
<dbReference type="EMBL" id="AF461535">
    <property type="protein sequence ID" value="AAL67842.1"/>
    <property type="molecule type" value="Genomic_DNA"/>
</dbReference>
<dbReference type="EMBL" id="AF461537">
    <property type="protein sequence ID" value="AAL67844.1"/>
    <property type="molecule type" value="Genomic_DNA"/>
</dbReference>
<dbReference type="EMBL" id="AL111168">
    <property type="protein sequence ID" value="CAL35336.1"/>
    <property type="molecule type" value="Genomic_DNA"/>
</dbReference>
<dbReference type="PIR" id="G81328">
    <property type="entry name" value="G81328"/>
</dbReference>
<dbReference type="RefSeq" id="WP_002858047.1">
    <property type="nucleotide sequence ID" value="NZ_SZUC01000001.1"/>
</dbReference>
<dbReference type="RefSeq" id="YP_002344612.1">
    <property type="nucleotide sequence ID" value="NC_002163.1"/>
</dbReference>
<dbReference type="SMR" id="O69289"/>
<dbReference type="IntAct" id="O69289">
    <property type="interactions" value="96"/>
</dbReference>
<dbReference type="STRING" id="192222.Cj1221"/>
<dbReference type="PaxDb" id="192222-Cj1221"/>
<dbReference type="EnsemblBacteria" id="CAL35336">
    <property type="protein sequence ID" value="CAL35336"/>
    <property type="gene ID" value="Cj1221"/>
</dbReference>
<dbReference type="GeneID" id="905511"/>
<dbReference type="KEGG" id="cje:Cj1221"/>
<dbReference type="PATRIC" id="fig|192222.6.peg.1203"/>
<dbReference type="eggNOG" id="COG0459">
    <property type="taxonomic scope" value="Bacteria"/>
</dbReference>
<dbReference type="HOGENOM" id="CLU_016503_3_0_7"/>
<dbReference type="OrthoDB" id="9766614at2"/>
<dbReference type="Proteomes" id="UP000000799">
    <property type="component" value="Chromosome"/>
</dbReference>
<dbReference type="GO" id="GO:0005737">
    <property type="term" value="C:cytoplasm"/>
    <property type="evidence" value="ECO:0007669"/>
    <property type="project" value="UniProtKB-SubCell"/>
</dbReference>
<dbReference type="GO" id="GO:0005524">
    <property type="term" value="F:ATP binding"/>
    <property type="evidence" value="ECO:0007669"/>
    <property type="project" value="UniProtKB-UniRule"/>
</dbReference>
<dbReference type="GO" id="GO:0140662">
    <property type="term" value="F:ATP-dependent protein folding chaperone"/>
    <property type="evidence" value="ECO:0007669"/>
    <property type="project" value="InterPro"/>
</dbReference>
<dbReference type="GO" id="GO:0016853">
    <property type="term" value="F:isomerase activity"/>
    <property type="evidence" value="ECO:0007669"/>
    <property type="project" value="UniProtKB-KW"/>
</dbReference>
<dbReference type="GO" id="GO:0051082">
    <property type="term" value="F:unfolded protein binding"/>
    <property type="evidence" value="ECO:0007669"/>
    <property type="project" value="UniProtKB-UniRule"/>
</dbReference>
<dbReference type="GO" id="GO:0042026">
    <property type="term" value="P:protein refolding"/>
    <property type="evidence" value="ECO:0007669"/>
    <property type="project" value="UniProtKB-UniRule"/>
</dbReference>
<dbReference type="CDD" id="cd03344">
    <property type="entry name" value="GroEL"/>
    <property type="match status" value="1"/>
</dbReference>
<dbReference type="FunFam" id="3.50.7.10:FF:000001">
    <property type="entry name" value="60 kDa chaperonin"/>
    <property type="match status" value="1"/>
</dbReference>
<dbReference type="Gene3D" id="3.50.7.10">
    <property type="entry name" value="GroEL"/>
    <property type="match status" value="1"/>
</dbReference>
<dbReference type="Gene3D" id="1.10.560.10">
    <property type="entry name" value="GroEL-like equatorial domain"/>
    <property type="match status" value="1"/>
</dbReference>
<dbReference type="Gene3D" id="3.30.260.10">
    <property type="entry name" value="TCP-1-like chaperonin intermediate domain"/>
    <property type="match status" value="1"/>
</dbReference>
<dbReference type="HAMAP" id="MF_00600">
    <property type="entry name" value="CH60"/>
    <property type="match status" value="1"/>
</dbReference>
<dbReference type="InterPro" id="IPR018370">
    <property type="entry name" value="Chaperonin_Cpn60_CS"/>
</dbReference>
<dbReference type="InterPro" id="IPR001844">
    <property type="entry name" value="Cpn60/GroEL"/>
</dbReference>
<dbReference type="InterPro" id="IPR002423">
    <property type="entry name" value="Cpn60/GroEL/TCP-1"/>
</dbReference>
<dbReference type="InterPro" id="IPR027409">
    <property type="entry name" value="GroEL-like_apical_dom_sf"/>
</dbReference>
<dbReference type="InterPro" id="IPR027413">
    <property type="entry name" value="GROEL-like_equatorial_sf"/>
</dbReference>
<dbReference type="InterPro" id="IPR027410">
    <property type="entry name" value="TCP-1-like_intermed_sf"/>
</dbReference>
<dbReference type="NCBIfam" id="TIGR02348">
    <property type="entry name" value="GroEL"/>
    <property type="match status" value="1"/>
</dbReference>
<dbReference type="NCBIfam" id="NF000592">
    <property type="entry name" value="PRK00013.1"/>
    <property type="match status" value="1"/>
</dbReference>
<dbReference type="NCBIfam" id="NF009487">
    <property type="entry name" value="PRK12849.1"/>
    <property type="match status" value="1"/>
</dbReference>
<dbReference type="NCBIfam" id="NF009488">
    <property type="entry name" value="PRK12850.1"/>
    <property type="match status" value="1"/>
</dbReference>
<dbReference type="NCBIfam" id="NF009489">
    <property type="entry name" value="PRK12851.1"/>
    <property type="match status" value="1"/>
</dbReference>
<dbReference type="PANTHER" id="PTHR45633">
    <property type="entry name" value="60 KDA HEAT SHOCK PROTEIN, MITOCHONDRIAL"/>
    <property type="match status" value="1"/>
</dbReference>
<dbReference type="Pfam" id="PF00118">
    <property type="entry name" value="Cpn60_TCP1"/>
    <property type="match status" value="1"/>
</dbReference>
<dbReference type="PRINTS" id="PR00298">
    <property type="entry name" value="CHAPERONIN60"/>
</dbReference>
<dbReference type="SUPFAM" id="SSF52029">
    <property type="entry name" value="GroEL apical domain-like"/>
    <property type="match status" value="1"/>
</dbReference>
<dbReference type="SUPFAM" id="SSF48592">
    <property type="entry name" value="GroEL equatorial domain-like"/>
    <property type="match status" value="2"/>
</dbReference>
<dbReference type="PROSITE" id="PS00296">
    <property type="entry name" value="CHAPERONINS_CPN60"/>
    <property type="match status" value="1"/>
</dbReference>
<organism>
    <name type="scientific">Campylobacter jejuni subsp. jejuni serotype O:2 (strain ATCC 700819 / NCTC 11168)</name>
    <dbReference type="NCBI Taxonomy" id="192222"/>
    <lineage>
        <taxon>Bacteria</taxon>
        <taxon>Pseudomonadati</taxon>
        <taxon>Campylobacterota</taxon>
        <taxon>Epsilonproteobacteria</taxon>
        <taxon>Campylobacterales</taxon>
        <taxon>Campylobacteraceae</taxon>
        <taxon>Campylobacter</taxon>
    </lineage>
</organism>
<keyword id="KW-0067">ATP-binding</keyword>
<keyword id="KW-0143">Chaperone</keyword>
<keyword id="KW-0963">Cytoplasm</keyword>
<keyword id="KW-0413">Isomerase</keyword>
<keyword id="KW-0547">Nucleotide-binding</keyword>
<keyword id="KW-1185">Reference proteome</keyword>
<name>CH60_CAMJE</name>
<evidence type="ECO:0000255" key="1">
    <source>
        <dbReference type="HAMAP-Rule" id="MF_00600"/>
    </source>
</evidence>
<evidence type="ECO:0000305" key="2"/>
<accession>O69289</accession>
<accession>Q0P935</accession>
<accession>Q9PN75</accession>
<sequence length="545" mass="57971">MAKEIIFSDEARNKLYEGVKKLNDAVKVTMGPRGRNVLIQKSFGAPSITKDGVSVAKEVELKDSLENMGASLVREVASKTADQAGDGTTTATVLAHAIFKEGLRNITAGANPIEVKRGMDKACEAIVAELKKLSREVKDKKEIAQVATISANSDEKIGNLIADAMEKVGKDGVITVEEAKSINDELNVVEGMQFDRGYLSPYFITNAEKMTVELSSPYILLFDKKITNLKDLLPVLEQIQKTGKPLLIIAEDIEGEALATLVVNKLRGVLNISAVKAPGFGDRRKAMLEDIAILTGGEVISEELGRTLESATIQDLGQASSVIIDKDNTTIVNGAGEKANIDARVNQIKAQIAETTSDYDREKLQERLAKLSGGVAVIKVGAATETEMKEKKDRVDDALSATKAAVEEGIVIGGGAALIKAKAKIKLDLQGDEAIGAAIVERALRAPLRQIAENAGFDAGVVVNSVENAKDENTGFDAAKGEYVNMLESGIIDPVKVERVALLNAVSVASMLLTTEATISEIKEDKPTMPDMSGMGGMGGMGGMM</sequence>
<protein>
    <recommendedName>
        <fullName evidence="1">Chaperonin GroEL</fullName>
        <ecNumber evidence="1">5.6.1.7</ecNumber>
    </recommendedName>
    <alternativeName>
        <fullName evidence="1">60 kDa chaperonin</fullName>
    </alternativeName>
    <alternativeName>
        <fullName evidence="1">Chaperonin-60</fullName>
        <shortName evidence="1">Cpn60</shortName>
    </alternativeName>
</protein>
<gene>
    <name evidence="1" type="primary">groEL</name>
    <name evidence="1" type="synonym">groL</name>
    <name type="synonym">mopA</name>
    <name type="ordered locus">Cj1221</name>
</gene>
<reference key="1">
    <citation type="journal article" date="1999" name="Microbiology">
        <title>Cloning, sequencing and molecular analysis of the Campylobacter jejuni groESL bicistronic operon.</title>
        <authorList>
            <person name="Thies F.L."/>
            <person name="Weishaupt A."/>
            <person name="Karch H."/>
            <person name="Hartung H.P."/>
            <person name="Giegerich G."/>
        </authorList>
    </citation>
    <scope>NUCLEOTIDE SEQUENCE [GENOMIC DNA]</scope>
</reference>
<reference key="2">
    <citation type="submission" date="2001-12" db="EMBL/GenBank/DDBJ databases">
        <title>Sequencing of the cpn60 gene from various Campylobacter jejuni isolates.</title>
        <authorList>
            <person name="Cunningham A."/>
            <person name="Taboada E."/>
            <person name="Nash J.H."/>
            <person name="Wakarchuk W.W."/>
            <person name="Gilbert M."/>
        </authorList>
    </citation>
    <scope>NUCLEOTIDE SEQUENCE [GENOMIC DNA]</scope>
    <source>
        <strain>ATCC 43429 / MK5-S7630 / Serotype O:1</strain>
        <strain>ATCC 43432 / MK7 / Serotype O:4</strain>
        <strain>ATCC 43438 / MK1 / Serotype O:10</strain>
        <strain>ATCC 43456 / MK290 / Serotype O:36</strain>
    </source>
</reference>
<reference key="3">
    <citation type="journal article" date="2000" name="Nature">
        <title>The genome sequence of the food-borne pathogen Campylobacter jejuni reveals hypervariable sequences.</title>
        <authorList>
            <person name="Parkhill J."/>
            <person name="Wren B.W."/>
            <person name="Mungall K.L."/>
            <person name="Ketley J.M."/>
            <person name="Churcher C.M."/>
            <person name="Basham D."/>
            <person name="Chillingworth T."/>
            <person name="Davies R.M."/>
            <person name="Feltwell T."/>
            <person name="Holroyd S."/>
            <person name="Jagels K."/>
            <person name="Karlyshev A.V."/>
            <person name="Moule S."/>
            <person name="Pallen M.J."/>
            <person name="Penn C.W."/>
            <person name="Quail M.A."/>
            <person name="Rajandream M.A."/>
            <person name="Rutherford K.M."/>
            <person name="van Vliet A.H.M."/>
            <person name="Whitehead S."/>
            <person name="Barrell B.G."/>
        </authorList>
    </citation>
    <scope>NUCLEOTIDE SEQUENCE [LARGE SCALE GENOMIC DNA]</scope>
    <source>
        <strain>ATCC 700819 / NCTC 11168</strain>
    </source>
</reference>
<proteinExistence type="inferred from homology"/>
<comment type="function">
    <text evidence="1">Together with its co-chaperonin GroES, plays an essential role in assisting protein folding. The GroEL-GroES system forms a nano-cage that allows encapsulation of the non-native substrate proteins and provides a physical environment optimized to promote and accelerate protein folding.</text>
</comment>
<comment type="catalytic activity">
    <reaction evidence="1">
        <text>ATP + H2O + a folded polypeptide = ADP + phosphate + an unfolded polypeptide.</text>
        <dbReference type="EC" id="5.6.1.7"/>
    </reaction>
</comment>
<comment type="subunit">
    <text evidence="1">Forms a cylinder of 14 subunits composed of two heptameric rings stacked back-to-back. Interacts with the co-chaperonin GroES.</text>
</comment>
<comment type="subcellular location">
    <subcellularLocation>
        <location evidence="1">Cytoplasm</location>
    </subcellularLocation>
</comment>
<comment type="similarity">
    <text evidence="1">Belongs to the chaperonin (HSP60) family.</text>
</comment>
<feature type="chain" id="PRO_0000063322" description="Chaperonin GroEL">
    <location>
        <begin position="1"/>
        <end position="545"/>
    </location>
</feature>
<feature type="binding site" evidence="1">
    <location>
        <begin position="29"/>
        <end position="32"/>
    </location>
    <ligand>
        <name>ATP</name>
        <dbReference type="ChEBI" id="CHEBI:30616"/>
    </ligand>
</feature>
<feature type="binding site" evidence="1">
    <location>
        <position position="50"/>
    </location>
    <ligand>
        <name>ATP</name>
        <dbReference type="ChEBI" id="CHEBI:30616"/>
    </ligand>
</feature>
<feature type="binding site" evidence="1">
    <location>
        <begin position="86"/>
        <end position="90"/>
    </location>
    <ligand>
        <name>ATP</name>
        <dbReference type="ChEBI" id="CHEBI:30616"/>
    </ligand>
</feature>
<feature type="binding site" evidence="1">
    <location>
        <position position="414"/>
    </location>
    <ligand>
        <name>ATP</name>
        <dbReference type="ChEBI" id="CHEBI:30616"/>
    </ligand>
</feature>
<feature type="binding site" evidence="1">
    <location>
        <begin position="477"/>
        <end position="479"/>
    </location>
    <ligand>
        <name>ATP</name>
        <dbReference type="ChEBI" id="CHEBI:30616"/>
    </ligand>
</feature>
<feature type="binding site" evidence="1">
    <location>
        <position position="493"/>
    </location>
    <ligand>
        <name>ATP</name>
        <dbReference type="ChEBI" id="CHEBI:30616"/>
    </ligand>
</feature>
<feature type="sequence conflict" description="In Ref. 1; CAA73778." evidence="2" ref="1">
    <original>A</original>
    <variation>P</variation>
    <location>
        <position position="179"/>
    </location>
</feature>
<feature type="sequence conflict" description="In Ref. 1; CAA73778." evidence="2" ref="1">
    <original>A</original>
    <variation>T</variation>
    <location>
        <position position="383"/>
    </location>
</feature>